<dbReference type="EMBL" id="CH473975">
    <property type="protein sequence ID" value="EDL95340.1"/>
    <property type="molecule type" value="Genomic_DNA"/>
</dbReference>
<dbReference type="EMBL" id="BC058497">
    <property type="protein sequence ID" value="AAH58497.1"/>
    <property type="molecule type" value="mRNA"/>
</dbReference>
<dbReference type="RefSeq" id="NP_997681.2">
    <property type="nucleotide sequence ID" value="NM_212516.3"/>
</dbReference>
<dbReference type="SMR" id="Q6PDU7"/>
<dbReference type="BioGRID" id="256666">
    <property type="interactions" value="1"/>
</dbReference>
<dbReference type="CORUM" id="Q6PDU7"/>
<dbReference type="FunCoup" id="Q6PDU7">
    <property type="interactions" value="471"/>
</dbReference>
<dbReference type="IntAct" id="Q6PDU7">
    <property type="interactions" value="2"/>
</dbReference>
<dbReference type="MINT" id="Q6PDU7"/>
<dbReference type="STRING" id="10116.ENSRNOP00000040969"/>
<dbReference type="GlyGen" id="Q6PDU7">
    <property type="glycosylation" value="3 sites, 1 O-linked glycan (3 sites)"/>
</dbReference>
<dbReference type="iPTMnet" id="Q6PDU7"/>
<dbReference type="PhosphoSitePlus" id="Q6PDU7"/>
<dbReference type="jPOST" id="Q6PDU7"/>
<dbReference type="PaxDb" id="10116-ENSRNOP00000040969"/>
<dbReference type="Ensembl" id="ENSRNOT00000050878.5">
    <property type="protein sequence ID" value="ENSRNOP00000040969.2"/>
    <property type="gene ID" value="ENSRNOG00000028884.5"/>
</dbReference>
<dbReference type="GeneID" id="300677"/>
<dbReference type="KEGG" id="rno:300677"/>
<dbReference type="UCSC" id="RGD:1303259">
    <property type="organism name" value="rat"/>
</dbReference>
<dbReference type="AGR" id="RGD:1303259"/>
<dbReference type="CTD" id="10632"/>
<dbReference type="RGD" id="1303259">
    <property type="gene designation" value="Atp5mg"/>
</dbReference>
<dbReference type="eggNOG" id="KOG4103">
    <property type="taxonomic scope" value="Eukaryota"/>
</dbReference>
<dbReference type="GeneTree" id="ENSGT00390000009724"/>
<dbReference type="HOGENOM" id="CLU_152793_1_1_1"/>
<dbReference type="InParanoid" id="Q6PDU7"/>
<dbReference type="OMA" id="TEVCMWF"/>
<dbReference type="PhylomeDB" id="Q6PDU7"/>
<dbReference type="TreeFam" id="TF313978"/>
<dbReference type="Reactome" id="R-RNO-163210">
    <property type="pathway name" value="Formation of ATP by chemiosmotic coupling"/>
</dbReference>
<dbReference type="Reactome" id="R-RNO-8949613">
    <property type="pathway name" value="Cristae formation"/>
</dbReference>
<dbReference type="Reactome" id="R-RNO-9837999">
    <property type="pathway name" value="Mitochondrial protein degradation"/>
</dbReference>
<dbReference type="PRO" id="PR:Q6PDU7"/>
<dbReference type="Proteomes" id="UP000002494">
    <property type="component" value="Chromosome 8"/>
</dbReference>
<dbReference type="Proteomes" id="UP000234681">
    <property type="component" value="Chromosome 8"/>
</dbReference>
<dbReference type="Bgee" id="ENSRNOG00000028884">
    <property type="expression patterns" value="Expressed in heart and 19 other cell types or tissues"/>
</dbReference>
<dbReference type="GO" id="GO:0005743">
    <property type="term" value="C:mitochondrial inner membrane"/>
    <property type="evidence" value="ECO:0007669"/>
    <property type="project" value="UniProtKB-SubCell"/>
</dbReference>
<dbReference type="GO" id="GO:0045259">
    <property type="term" value="C:proton-transporting ATP synthase complex"/>
    <property type="evidence" value="ECO:0000314"/>
    <property type="project" value="UniProtKB"/>
</dbReference>
<dbReference type="GO" id="GO:0015078">
    <property type="term" value="F:proton transmembrane transporter activity"/>
    <property type="evidence" value="ECO:0007669"/>
    <property type="project" value="InterPro"/>
</dbReference>
<dbReference type="GO" id="GO:0015986">
    <property type="term" value="P:proton motive force-driven ATP synthesis"/>
    <property type="evidence" value="ECO:0000318"/>
    <property type="project" value="GO_Central"/>
</dbReference>
<dbReference type="GO" id="GO:0042776">
    <property type="term" value="P:proton motive force-driven mitochondrial ATP synthesis"/>
    <property type="evidence" value="ECO:0000266"/>
    <property type="project" value="RGD"/>
</dbReference>
<dbReference type="InterPro" id="IPR006808">
    <property type="entry name" value="ATP_synth_F0_gsu_mt"/>
</dbReference>
<dbReference type="InterPro" id="IPR016702">
    <property type="entry name" value="ATP_synth_su_G_mt_met"/>
</dbReference>
<dbReference type="PANTHER" id="PTHR12386">
    <property type="entry name" value="ATP SYNTHASE SUBUNIT"/>
    <property type="match status" value="1"/>
</dbReference>
<dbReference type="Pfam" id="PF04718">
    <property type="entry name" value="ATP-synt_G"/>
    <property type="match status" value="1"/>
</dbReference>
<dbReference type="PIRSF" id="PIRSF017835">
    <property type="entry name" value="ATP-synth_g_mitoch_animal"/>
    <property type="match status" value="1"/>
</dbReference>
<accession>Q6PDU7</accession>
<accession>G3V9A9</accession>
<organism>
    <name type="scientific">Rattus norvegicus</name>
    <name type="common">Rat</name>
    <dbReference type="NCBI Taxonomy" id="10116"/>
    <lineage>
        <taxon>Eukaryota</taxon>
        <taxon>Metazoa</taxon>
        <taxon>Chordata</taxon>
        <taxon>Craniata</taxon>
        <taxon>Vertebrata</taxon>
        <taxon>Euteleostomi</taxon>
        <taxon>Mammalia</taxon>
        <taxon>Eutheria</taxon>
        <taxon>Euarchontoglires</taxon>
        <taxon>Glires</taxon>
        <taxon>Rodentia</taxon>
        <taxon>Myomorpha</taxon>
        <taxon>Muroidea</taxon>
        <taxon>Muridae</taxon>
        <taxon>Murinae</taxon>
        <taxon>Rattus</taxon>
    </lineage>
</organism>
<comment type="function">
    <text evidence="1 2">Subunit g, of the mitochondrial membrane ATP synthase complex (F(1)F(0) ATP synthase or Complex V) that produces ATP from ADP in the presence of a proton gradient across the membrane which is generated by electron transport complexes of the respiratory chain. ATP synthase complex consist of a soluble F(1) head domain - the catalytic core - and a membrane F(1) domain - the membrane proton channel. These two domains are linked by a central stalk rotating inside the F(1) region and a stationary peripheral stalk. During catalysis, ATP synthesis in the catalytic domain of F(1) is coupled via a rotary mechanism of the central stalk subunits to proton translocation (By similarity). In vivo, can only synthesize ATP although its ATP hydrolase activity can be activated artificially in vitro (By similarity). Part of the complex F(0) domain (By similarity).</text>
</comment>
<comment type="subunit">
    <text evidence="1 4">Component of the ATP synthase complex composed at least of ATP5F1A/subunit alpha, ATP5F1B/subunit beta, ATP5MC1/subunit c (homooctomer), MT-ATP6/subunit a, MT-ATP8/subunit 8, ATP5ME/subunit e, ATP5MF/subunit f, ATP5MG/subunit g, ATP5MK/subunit k, ATP5MJ/subunit j, ATP5F1C/subunit gamma, ATP5F1D/subunit delta, ATP5F1E/subunit epsilon, ATP5PF/subunit F6, ATP5PB/subunit b, ATP5PD/subunit d, ATP5PO/subunit OSCP (PubMed:17575325). ATP synthase complex consists of a soluble F(1) head domain (subunits alpha(3) and beta(3)) - the catalytic core - and a membrane F(0) domain - the membrane proton channel (subunits c, a, 8, e, f, g, k and j). These two domains are linked by a central stalk (subunits gamma, delta, and epsilon) rotating inside the F1 region and a stationary peripheral stalk (subunits F6, b, d, and OSCP) (By similarity).</text>
</comment>
<comment type="subcellular location">
    <subcellularLocation>
        <location>Mitochondrion</location>
    </subcellularLocation>
    <subcellularLocation>
        <location>Mitochondrion inner membrane</location>
    </subcellularLocation>
</comment>
<comment type="similarity">
    <text evidence="5">Belongs to the ATPase g subunit family.</text>
</comment>
<keyword id="KW-0007">Acetylation</keyword>
<keyword id="KW-0066">ATP synthesis</keyword>
<keyword id="KW-0138">CF(0)</keyword>
<keyword id="KW-0375">Hydrogen ion transport</keyword>
<keyword id="KW-0406">Ion transport</keyword>
<keyword id="KW-0472">Membrane</keyword>
<keyword id="KW-0496">Mitochondrion</keyword>
<keyword id="KW-0999">Mitochondrion inner membrane</keyword>
<keyword id="KW-1185">Reference proteome</keyword>
<keyword id="KW-0813">Transport</keyword>
<name>ATP5L_RAT</name>
<protein>
    <recommendedName>
        <fullName evidence="5">ATP synthase F(0) complex subunit g, mitochondrial</fullName>
        <shortName>ATPase subunit g</shortName>
    </recommendedName>
    <alternativeName>
        <fullName evidence="5">ATP synthase membrane subunit g</fullName>
    </alternativeName>
</protein>
<proteinExistence type="evidence at protein level"/>
<evidence type="ECO:0000250" key="1">
    <source>
        <dbReference type="UniProtKB" id="O75964"/>
    </source>
</evidence>
<evidence type="ECO:0000250" key="2">
    <source>
        <dbReference type="UniProtKB" id="P19483"/>
    </source>
</evidence>
<evidence type="ECO:0000250" key="3">
    <source>
        <dbReference type="UniProtKB" id="Q9CPQ8"/>
    </source>
</evidence>
<evidence type="ECO:0000269" key="4">
    <source>
    </source>
</evidence>
<evidence type="ECO:0000305" key="5"/>
<evidence type="ECO:0000312" key="6">
    <source>
        <dbReference type="RGD" id="1303259"/>
    </source>
</evidence>
<reference key="1">
    <citation type="submission" date="2005-07" db="EMBL/GenBank/DDBJ databases">
        <authorList>
            <person name="Mural R.J."/>
            <person name="Adams M.D."/>
            <person name="Myers E.W."/>
            <person name="Smith H.O."/>
            <person name="Venter J.C."/>
        </authorList>
    </citation>
    <scope>NUCLEOTIDE SEQUENCE [LARGE SCALE GENOMIC DNA]</scope>
    <source>
        <strain>Brown Norway</strain>
    </source>
</reference>
<reference key="2">
    <citation type="journal article" date="2004" name="Genome Res.">
        <title>The status, quality, and expansion of the NIH full-length cDNA project: the Mammalian Gene Collection (MGC).</title>
        <authorList>
            <consortium name="The MGC Project Team"/>
        </authorList>
    </citation>
    <scope>NUCLEOTIDE SEQUENCE [LARGE SCALE MRNA]</scope>
    <source>
        <tissue>Pituitary</tissue>
    </source>
</reference>
<reference key="3">
    <citation type="journal article" date="2007" name="Mol. Cell. Proteomics">
        <title>Identification of two proteins associated with mammalian ATP synthase.</title>
        <authorList>
            <person name="Meyer B."/>
            <person name="Wittig I."/>
            <person name="Trifilieff E."/>
            <person name="Karas M."/>
            <person name="Schaegger H."/>
        </authorList>
    </citation>
    <scope>IDENTIFICATION BY MASS SPECTROMETRY</scope>
    <scope>IDENTIFICATION IN THE ATP SYNTHASE COMPLEX</scope>
</reference>
<feature type="initiator methionine" description="Removed" evidence="1">
    <location>
        <position position="1"/>
    </location>
</feature>
<feature type="chain" id="PRO_0000416600" description="ATP synthase F(0) complex subunit g, mitochondrial">
    <location>
        <begin position="2"/>
        <end position="103"/>
    </location>
</feature>
<feature type="modified residue" description="N-acetylalanine" evidence="1">
    <location>
        <position position="2"/>
    </location>
</feature>
<feature type="modified residue" description="N6-acetyllysine" evidence="3">
    <location>
        <position position="11"/>
    </location>
</feature>
<feature type="modified residue" description="N6-acetyllysine" evidence="1">
    <location>
        <position position="24"/>
    </location>
</feature>
<feature type="modified residue" description="N6-acetyllysine" evidence="3">
    <location>
        <position position="54"/>
    </location>
</feature>
<feature type="sequence conflict" description="In Ref. 2; AAH58497." evidence="5" ref="2">
    <original>S</original>
    <variation>N</variation>
    <location>
        <position position="55"/>
    </location>
</feature>
<sequence>MAKFIRNLADKAPSMVAAAVTYSKPRLATFWHYARVELVPPTLGEIPTAIQSMKSIIHSAQTGNFKHLTVKEAVLNGLVATEVWMWFYIGEIIGKRGIVGYDV</sequence>
<gene>
    <name evidence="6" type="primary">Atp5mg</name>
    <name type="synonym">Atp5l</name>
</gene>